<reference key="1">
    <citation type="journal article" date="1997" name="Mol. Gen. Genet.">
        <title>Cloning, mapping and mutational analysis of the S-adenosylmethionine decarboxylase gene in Drosophila melanogaster.</title>
        <authorList>
            <person name="Larsson J."/>
            <person name="Rasmuson-Lestander A."/>
        </authorList>
    </citation>
    <scope>NUCLEOTIDE SEQUENCE [GENOMIC DNA / MRNA]</scope>
    <source>
        <strain>Canton-S</strain>
        <strain>Oregon-R</strain>
    </source>
</reference>
<reference key="2">
    <citation type="journal article" date="2000" name="Science">
        <title>The genome sequence of Drosophila melanogaster.</title>
        <authorList>
            <person name="Adams M.D."/>
            <person name="Celniker S.E."/>
            <person name="Holt R.A."/>
            <person name="Evans C.A."/>
            <person name="Gocayne J.D."/>
            <person name="Amanatides P.G."/>
            <person name="Scherer S.E."/>
            <person name="Li P.W."/>
            <person name="Hoskins R.A."/>
            <person name="Galle R.F."/>
            <person name="George R.A."/>
            <person name="Lewis S.E."/>
            <person name="Richards S."/>
            <person name="Ashburner M."/>
            <person name="Henderson S.N."/>
            <person name="Sutton G.G."/>
            <person name="Wortman J.R."/>
            <person name="Yandell M.D."/>
            <person name="Zhang Q."/>
            <person name="Chen L.X."/>
            <person name="Brandon R.C."/>
            <person name="Rogers Y.-H.C."/>
            <person name="Blazej R.G."/>
            <person name="Champe M."/>
            <person name="Pfeiffer B.D."/>
            <person name="Wan K.H."/>
            <person name="Doyle C."/>
            <person name="Baxter E.G."/>
            <person name="Helt G."/>
            <person name="Nelson C.R."/>
            <person name="Miklos G.L.G."/>
            <person name="Abril J.F."/>
            <person name="Agbayani A."/>
            <person name="An H.-J."/>
            <person name="Andrews-Pfannkoch C."/>
            <person name="Baldwin D."/>
            <person name="Ballew R.M."/>
            <person name="Basu A."/>
            <person name="Baxendale J."/>
            <person name="Bayraktaroglu L."/>
            <person name="Beasley E.M."/>
            <person name="Beeson K.Y."/>
            <person name="Benos P.V."/>
            <person name="Berman B.P."/>
            <person name="Bhandari D."/>
            <person name="Bolshakov S."/>
            <person name="Borkova D."/>
            <person name="Botchan M.R."/>
            <person name="Bouck J."/>
            <person name="Brokstein P."/>
            <person name="Brottier P."/>
            <person name="Burtis K.C."/>
            <person name="Busam D.A."/>
            <person name="Butler H."/>
            <person name="Cadieu E."/>
            <person name="Center A."/>
            <person name="Chandra I."/>
            <person name="Cherry J.M."/>
            <person name="Cawley S."/>
            <person name="Dahlke C."/>
            <person name="Davenport L.B."/>
            <person name="Davies P."/>
            <person name="de Pablos B."/>
            <person name="Delcher A."/>
            <person name="Deng Z."/>
            <person name="Mays A.D."/>
            <person name="Dew I."/>
            <person name="Dietz S.M."/>
            <person name="Dodson K."/>
            <person name="Doup L.E."/>
            <person name="Downes M."/>
            <person name="Dugan-Rocha S."/>
            <person name="Dunkov B.C."/>
            <person name="Dunn P."/>
            <person name="Durbin K.J."/>
            <person name="Evangelista C.C."/>
            <person name="Ferraz C."/>
            <person name="Ferriera S."/>
            <person name="Fleischmann W."/>
            <person name="Fosler C."/>
            <person name="Gabrielian A.E."/>
            <person name="Garg N.S."/>
            <person name="Gelbart W.M."/>
            <person name="Glasser K."/>
            <person name="Glodek A."/>
            <person name="Gong F."/>
            <person name="Gorrell J.H."/>
            <person name="Gu Z."/>
            <person name="Guan P."/>
            <person name="Harris M."/>
            <person name="Harris N.L."/>
            <person name="Harvey D.A."/>
            <person name="Heiman T.J."/>
            <person name="Hernandez J.R."/>
            <person name="Houck J."/>
            <person name="Hostin D."/>
            <person name="Houston K.A."/>
            <person name="Howland T.J."/>
            <person name="Wei M.-H."/>
            <person name="Ibegwam C."/>
            <person name="Jalali M."/>
            <person name="Kalush F."/>
            <person name="Karpen G.H."/>
            <person name="Ke Z."/>
            <person name="Kennison J.A."/>
            <person name="Ketchum K.A."/>
            <person name="Kimmel B.E."/>
            <person name="Kodira C.D."/>
            <person name="Kraft C.L."/>
            <person name="Kravitz S."/>
            <person name="Kulp D."/>
            <person name="Lai Z."/>
            <person name="Lasko P."/>
            <person name="Lei Y."/>
            <person name="Levitsky A.A."/>
            <person name="Li J.H."/>
            <person name="Li Z."/>
            <person name="Liang Y."/>
            <person name="Lin X."/>
            <person name="Liu X."/>
            <person name="Mattei B."/>
            <person name="McIntosh T.C."/>
            <person name="McLeod M.P."/>
            <person name="McPherson D."/>
            <person name="Merkulov G."/>
            <person name="Milshina N.V."/>
            <person name="Mobarry C."/>
            <person name="Morris J."/>
            <person name="Moshrefi A."/>
            <person name="Mount S.M."/>
            <person name="Moy M."/>
            <person name="Murphy B."/>
            <person name="Murphy L."/>
            <person name="Muzny D.M."/>
            <person name="Nelson D.L."/>
            <person name="Nelson D.R."/>
            <person name="Nelson K.A."/>
            <person name="Nixon K."/>
            <person name="Nusskern D.R."/>
            <person name="Pacleb J.M."/>
            <person name="Palazzolo M."/>
            <person name="Pittman G.S."/>
            <person name="Pan S."/>
            <person name="Pollard J."/>
            <person name="Puri V."/>
            <person name="Reese M.G."/>
            <person name="Reinert K."/>
            <person name="Remington K."/>
            <person name="Saunders R.D.C."/>
            <person name="Scheeler F."/>
            <person name="Shen H."/>
            <person name="Shue B.C."/>
            <person name="Siden-Kiamos I."/>
            <person name="Simpson M."/>
            <person name="Skupski M.P."/>
            <person name="Smith T.J."/>
            <person name="Spier E."/>
            <person name="Spradling A.C."/>
            <person name="Stapleton M."/>
            <person name="Strong R."/>
            <person name="Sun E."/>
            <person name="Svirskas R."/>
            <person name="Tector C."/>
            <person name="Turner R."/>
            <person name="Venter E."/>
            <person name="Wang A.H."/>
            <person name="Wang X."/>
            <person name="Wang Z.-Y."/>
            <person name="Wassarman D.A."/>
            <person name="Weinstock G.M."/>
            <person name="Weissenbach J."/>
            <person name="Williams S.M."/>
            <person name="Woodage T."/>
            <person name="Worley K.C."/>
            <person name="Wu D."/>
            <person name="Yang S."/>
            <person name="Yao Q.A."/>
            <person name="Ye J."/>
            <person name="Yeh R.-F."/>
            <person name="Zaveri J.S."/>
            <person name="Zhan M."/>
            <person name="Zhang G."/>
            <person name="Zhao Q."/>
            <person name="Zheng L."/>
            <person name="Zheng X.H."/>
            <person name="Zhong F.N."/>
            <person name="Zhong W."/>
            <person name="Zhou X."/>
            <person name="Zhu S.C."/>
            <person name="Zhu X."/>
            <person name="Smith H.O."/>
            <person name="Gibbs R.A."/>
            <person name="Myers E.W."/>
            <person name="Rubin G.M."/>
            <person name="Venter J.C."/>
        </authorList>
    </citation>
    <scope>NUCLEOTIDE SEQUENCE [LARGE SCALE GENOMIC DNA]</scope>
    <source>
        <strain>Berkeley</strain>
    </source>
</reference>
<reference key="3">
    <citation type="journal article" date="2002" name="Genome Biol.">
        <title>Annotation of the Drosophila melanogaster euchromatic genome: a systematic review.</title>
        <authorList>
            <person name="Misra S."/>
            <person name="Crosby M.A."/>
            <person name="Mungall C.J."/>
            <person name="Matthews B.B."/>
            <person name="Campbell K.S."/>
            <person name="Hradecky P."/>
            <person name="Huang Y."/>
            <person name="Kaminker J.S."/>
            <person name="Millburn G.H."/>
            <person name="Prochnik S.E."/>
            <person name="Smith C.D."/>
            <person name="Tupy J.L."/>
            <person name="Whitfield E.J."/>
            <person name="Bayraktaroglu L."/>
            <person name="Berman B.P."/>
            <person name="Bettencourt B.R."/>
            <person name="Celniker S.E."/>
            <person name="de Grey A.D.N.J."/>
            <person name="Drysdale R.A."/>
            <person name="Harris N.L."/>
            <person name="Richter J."/>
            <person name="Russo S."/>
            <person name="Schroeder A.J."/>
            <person name="Shu S.Q."/>
            <person name="Stapleton M."/>
            <person name="Yamada C."/>
            <person name="Ashburner M."/>
            <person name="Gelbart W.M."/>
            <person name="Rubin G.M."/>
            <person name="Lewis S.E."/>
        </authorList>
    </citation>
    <scope>GENOME REANNOTATION</scope>
    <source>
        <strain>Berkeley</strain>
    </source>
</reference>
<gene>
    <name type="primary">SamDC</name>
    <name type="ORF">CG5029</name>
</gene>
<sequence length="347" mass="39817">MLENGSHFFEGVEKLLEIWFEESSNGDDDLRNISRSDWENVLSNVNCQIISTSKNDIIDAFVLSESSMFVSKRRWILKTCGTTTPLKCLGQLLKLAEANGYNVVADLFYSRKNFTRPEAQITPHQGFTEEVTYLDSIFPNGRSYCLGSMNLECWYLYTFSRSDIKITPQLISDEKNVDSDPDQTIEILMQDLDPETMSIFYKNKFNDANGATVKSGIDTILPTMHIDDFLFDPCGYSMNGINDKGEYMTIHITPENQFSYVSFETNVALSNYRKLINQVINTFKPGKFIVTIFANKCSLAYETMKELEVEYSQGSHWKRTDMQCCNFPSYNLLFAQYSHSEKTGDYL</sequence>
<keyword id="KW-0068">Autocatalytic cleavage</keyword>
<keyword id="KW-0210">Decarboxylase</keyword>
<keyword id="KW-0456">Lyase</keyword>
<keyword id="KW-0620">Polyamine biosynthesis</keyword>
<keyword id="KW-0670">Pyruvate</keyword>
<keyword id="KW-1185">Reference proteome</keyword>
<keyword id="KW-0949">S-adenosyl-L-methionine</keyword>
<keyword id="KW-0704">Schiff base</keyword>
<keyword id="KW-0745">Spermidine biosynthesis</keyword>
<keyword id="KW-0865">Zymogen</keyword>
<accession>P91931</accession>
<accession>P91925</accession>
<accession>Q9VKY9</accession>
<feature type="chain" id="PRO_0000029973" description="S-adenosylmethionine decarboxylase beta chain" evidence="1">
    <location>
        <begin position="1"/>
        <end position="65"/>
    </location>
</feature>
<feature type="chain" id="PRO_0000029974" description="S-adenosylmethionine decarboxylase alpha chain" evidence="1">
    <location>
        <begin position="66"/>
        <end position="347"/>
    </location>
</feature>
<feature type="active site" evidence="1">
    <location>
        <position position="10"/>
    </location>
</feature>
<feature type="active site" evidence="1">
    <location>
        <position position="13"/>
    </location>
</feature>
<feature type="active site" description="Schiff-base intermediate with substrate; via pyruvic acid" evidence="1">
    <location>
        <position position="66"/>
    </location>
</feature>
<feature type="active site" description="Proton donor; for catalytic activity" evidence="1">
    <location>
        <position position="80"/>
    </location>
</feature>
<feature type="active site" description="Proton acceptor; for processing activity" evidence="1">
    <location>
        <position position="237"/>
    </location>
</feature>
<feature type="active site" description="Proton acceptor; for processing activity" evidence="1">
    <location>
        <position position="251"/>
    </location>
</feature>
<feature type="site" description="Cleavage (non-hydrolytic); by autolysis" evidence="1">
    <location>
        <begin position="65"/>
        <end position="66"/>
    </location>
</feature>
<feature type="modified residue" description="Pyruvic acid (Ser); by autocatalysis" evidence="1">
    <location>
        <position position="66"/>
    </location>
</feature>
<feature type="sequence variant" description="In strain: Canton-S.">
    <original>T</original>
    <variation>S</variation>
    <location>
        <position position="167"/>
    </location>
</feature>
<feature type="sequence variant" description="In strain: Canton-S.">
    <original>S</original>
    <variation>T</variation>
    <location>
        <position position="172"/>
    </location>
</feature>
<feature type="sequence variant" description="In strain: Berkeley.">
    <original>Y</original>
    <variation>N</variation>
    <location>
        <position position="346"/>
    </location>
</feature>
<protein>
    <recommendedName>
        <fullName>S-adenosylmethionine decarboxylase proenzyme</fullName>
        <shortName>AdoMetDC</shortName>
        <shortName>SAMDC</shortName>
        <ecNumber>4.1.1.50</ecNumber>
    </recommendedName>
    <component>
        <recommendedName>
            <fullName>S-adenosylmethionine decarboxylase alpha chain</fullName>
        </recommendedName>
    </component>
    <component>
        <recommendedName>
            <fullName>S-adenosylmethionine decarboxylase beta chain</fullName>
        </recommendedName>
    </component>
</protein>
<name>DCAM_DROME</name>
<evidence type="ECO:0000250" key="1"/>
<evidence type="ECO:0000305" key="2"/>
<proteinExistence type="evidence at transcript level"/>
<dbReference type="EC" id="4.1.1.50"/>
<dbReference type="EMBL" id="Y11216">
    <property type="protein sequence ID" value="CAA72102.1"/>
    <property type="molecule type" value="Genomic_DNA"/>
</dbReference>
<dbReference type="EMBL" id="Y11820">
    <property type="protein sequence ID" value="CAA72505.1"/>
    <property type="molecule type" value="mRNA"/>
</dbReference>
<dbReference type="EMBL" id="AE014134">
    <property type="protein sequence ID" value="AAF52917.1"/>
    <property type="molecule type" value="Genomic_DNA"/>
</dbReference>
<dbReference type="RefSeq" id="NP_477223.2">
    <property type="nucleotide sequence ID" value="NM_057875.5"/>
</dbReference>
<dbReference type="SMR" id="P91931"/>
<dbReference type="BioGRID" id="60481">
    <property type="interactions" value="4"/>
</dbReference>
<dbReference type="FunCoup" id="P91931">
    <property type="interactions" value="727"/>
</dbReference>
<dbReference type="STRING" id="7227.FBpp0079584"/>
<dbReference type="PaxDb" id="7227-FBpp0079584"/>
<dbReference type="DNASU" id="34396"/>
<dbReference type="GeneID" id="34396"/>
<dbReference type="KEGG" id="dme:Dmel_CG5029"/>
<dbReference type="AGR" id="FB:FBgn0019932"/>
<dbReference type="CTD" id="34396"/>
<dbReference type="FlyBase" id="FBgn0019932">
    <property type="gene designation" value="SamDC"/>
</dbReference>
<dbReference type="VEuPathDB" id="VectorBase:FBgn0019932"/>
<dbReference type="eggNOG" id="KOG0788">
    <property type="taxonomic scope" value="Eukaryota"/>
</dbReference>
<dbReference type="HOGENOM" id="CLU_023050_1_0_1"/>
<dbReference type="InParanoid" id="P91931"/>
<dbReference type="OrthoDB" id="1068353at2759"/>
<dbReference type="PhylomeDB" id="P91931"/>
<dbReference type="Reactome" id="R-DME-351202">
    <property type="pathway name" value="Metabolism of polyamines"/>
</dbReference>
<dbReference type="UniPathway" id="UPA00331">
    <property type="reaction ID" value="UER00451"/>
</dbReference>
<dbReference type="BioGRID-ORCS" id="34396">
    <property type="hits" value="0 hits in 3 CRISPR screens"/>
</dbReference>
<dbReference type="GenomeRNAi" id="34396"/>
<dbReference type="PRO" id="PR:P91931"/>
<dbReference type="Proteomes" id="UP000000803">
    <property type="component" value="Chromosome 2L"/>
</dbReference>
<dbReference type="ExpressionAtlas" id="P91931">
    <property type="expression patterns" value="baseline and differential"/>
</dbReference>
<dbReference type="GO" id="GO:0005829">
    <property type="term" value="C:cytosol"/>
    <property type="evidence" value="ECO:0000318"/>
    <property type="project" value="GO_Central"/>
</dbReference>
<dbReference type="GO" id="GO:0004014">
    <property type="term" value="F:adenosylmethionine decarboxylase activity"/>
    <property type="evidence" value="ECO:0000318"/>
    <property type="project" value="GO_Central"/>
</dbReference>
<dbReference type="GO" id="GO:0050829">
    <property type="term" value="P:defense response to Gram-negative bacterium"/>
    <property type="evidence" value="ECO:0000315"/>
    <property type="project" value="FlyBase"/>
</dbReference>
<dbReference type="GO" id="GO:0008295">
    <property type="term" value="P:spermidine biosynthetic process"/>
    <property type="evidence" value="ECO:0000318"/>
    <property type="project" value="GO_Central"/>
</dbReference>
<dbReference type="GO" id="GO:0006597">
    <property type="term" value="P:spermine biosynthetic process"/>
    <property type="evidence" value="ECO:0000318"/>
    <property type="project" value="GO_Central"/>
</dbReference>
<dbReference type="FunFam" id="3.60.90.10:FF:000018">
    <property type="entry name" value="S-adenosylmethionine decarboxylase proenzyme"/>
    <property type="match status" value="1"/>
</dbReference>
<dbReference type="Gene3D" id="3.60.90.10">
    <property type="entry name" value="S-adenosylmethionine decarboxylase"/>
    <property type="match status" value="1"/>
</dbReference>
<dbReference type="InterPro" id="IPR048283">
    <property type="entry name" value="AdoMetDC-like"/>
</dbReference>
<dbReference type="InterPro" id="IPR001985">
    <property type="entry name" value="S-AdoMet_decarboxylase_euk"/>
</dbReference>
<dbReference type="InterPro" id="IPR016067">
    <property type="entry name" value="S-AdoMet_deCO2ase_core"/>
</dbReference>
<dbReference type="InterPro" id="IPR018166">
    <property type="entry name" value="S-AdoMet_deCO2ase_CS"/>
</dbReference>
<dbReference type="NCBIfam" id="TIGR00535">
    <property type="entry name" value="SAM_DCase"/>
    <property type="match status" value="1"/>
</dbReference>
<dbReference type="PANTHER" id="PTHR11570">
    <property type="entry name" value="S-ADENOSYLMETHIONINE DECARBOXYLASE"/>
    <property type="match status" value="1"/>
</dbReference>
<dbReference type="PANTHER" id="PTHR11570:SF0">
    <property type="entry name" value="S-ADENOSYLMETHIONINE DECARBOXYLASE PROENZYME"/>
    <property type="match status" value="1"/>
</dbReference>
<dbReference type="Pfam" id="PF01536">
    <property type="entry name" value="SAM_decarbox"/>
    <property type="match status" value="1"/>
</dbReference>
<dbReference type="PIRSF" id="PIRSF001355">
    <property type="entry name" value="S-AdenosylMet_decarboxylase"/>
    <property type="match status" value="1"/>
</dbReference>
<dbReference type="SUPFAM" id="SSF56276">
    <property type="entry name" value="S-adenosylmethionine decarboxylase"/>
    <property type="match status" value="1"/>
</dbReference>
<dbReference type="PROSITE" id="PS01336">
    <property type="entry name" value="ADOMETDC"/>
    <property type="match status" value="1"/>
</dbReference>
<comment type="catalytic activity">
    <reaction>
        <text>S-adenosyl-L-methionine + H(+) = S-adenosyl 3-(methylsulfanyl)propylamine + CO2</text>
        <dbReference type="Rhea" id="RHEA:15981"/>
        <dbReference type="ChEBI" id="CHEBI:15378"/>
        <dbReference type="ChEBI" id="CHEBI:16526"/>
        <dbReference type="ChEBI" id="CHEBI:57443"/>
        <dbReference type="ChEBI" id="CHEBI:59789"/>
        <dbReference type="EC" id="4.1.1.50"/>
    </reaction>
</comment>
<comment type="cofactor">
    <cofactor>
        <name>pyruvate</name>
        <dbReference type="ChEBI" id="CHEBI:15361"/>
    </cofactor>
    <text>Binds 1 pyruvoyl group covalently per subunit.</text>
</comment>
<comment type="pathway">
    <text>Amine and polyamine biosynthesis; S-adenosylmethioninamine biosynthesis; S-adenosylmethioninamine from S-adenosyl-L-methionine: step 1/1.</text>
</comment>
<comment type="PTM">
    <text evidence="1">Is synthesized initially as an inactive proenzyme. Formation of the active enzyme involves a self-maturation process in which the active site pyruvoyl group is generated from an internal serine residue via an autocatalytic post-translational modification. Two non-identical subunits are generated from the proenzyme in this reaction, and the pyruvate is formed at the N-terminus of the alpha chain, which is derived from the carboxyl end of the proenzyme. The post-translation cleavage follows an unusual pathway, termed non-hydrolytic serinolysis, in which the side chain hydroxyl group of the serine supplies its oxygen atom to form the C-terminus of the beta chain, while the remainder of the serine residue undergoes an oxidative deamination to produce ammonia and the pyruvoyl group blocking the N-terminus of the alpha chain (By similarity).</text>
</comment>
<comment type="similarity">
    <text evidence="2">Belongs to the eukaryotic AdoMetDC family.</text>
</comment>
<organism>
    <name type="scientific">Drosophila melanogaster</name>
    <name type="common">Fruit fly</name>
    <dbReference type="NCBI Taxonomy" id="7227"/>
    <lineage>
        <taxon>Eukaryota</taxon>
        <taxon>Metazoa</taxon>
        <taxon>Ecdysozoa</taxon>
        <taxon>Arthropoda</taxon>
        <taxon>Hexapoda</taxon>
        <taxon>Insecta</taxon>
        <taxon>Pterygota</taxon>
        <taxon>Neoptera</taxon>
        <taxon>Endopterygota</taxon>
        <taxon>Diptera</taxon>
        <taxon>Brachycera</taxon>
        <taxon>Muscomorpha</taxon>
        <taxon>Ephydroidea</taxon>
        <taxon>Drosophilidae</taxon>
        <taxon>Drosophila</taxon>
        <taxon>Sophophora</taxon>
    </lineage>
</organism>